<accession>A8H3Z4</accession>
<comment type="function">
    <text evidence="1">This is one of the proteins that binds to the 5S RNA in the ribosome where it forms part of the central protuberance.</text>
</comment>
<comment type="subunit">
    <text evidence="1">Part of the 50S ribosomal subunit; part of the 5S rRNA/L5/L18/L25 subcomplex. Contacts the 5S rRNA. Binds to the 5S rRNA independently of L5 and L18.</text>
</comment>
<comment type="similarity">
    <text evidence="1">Belongs to the bacterial ribosomal protein bL25 family.</text>
</comment>
<sequence>MSYTIAAQVRTEIGKGSSRRLRHAKKVPAVIYGPGKEAISIVFDHKDIINIQENQDFYTSELTIALEGKDVKVRVQDMQRHAFKPMIEHVDFKFA</sequence>
<protein>
    <recommendedName>
        <fullName evidence="1">Large ribosomal subunit protein bL25</fullName>
    </recommendedName>
    <alternativeName>
        <fullName evidence="2">50S ribosomal protein L25</fullName>
    </alternativeName>
</protein>
<proteinExistence type="inferred from homology"/>
<keyword id="KW-1185">Reference proteome</keyword>
<keyword id="KW-0687">Ribonucleoprotein</keyword>
<keyword id="KW-0689">Ribosomal protein</keyword>
<keyword id="KW-0694">RNA-binding</keyword>
<keyword id="KW-0699">rRNA-binding</keyword>
<dbReference type="EMBL" id="CP000851">
    <property type="protein sequence ID" value="ABV87281.1"/>
    <property type="molecule type" value="Genomic_DNA"/>
</dbReference>
<dbReference type="RefSeq" id="WP_012155199.1">
    <property type="nucleotide sequence ID" value="NC_009901.1"/>
</dbReference>
<dbReference type="SMR" id="A8H3Z4"/>
<dbReference type="STRING" id="398579.Spea_1959"/>
<dbReference type="KEGG" id="spl:Spea_1959"/>
<dbReference type="eggNOG" id="COG1825">
    <property type="taxonomic scope" value="Bacteria"/>
</dbReference>
<dbReference type="HOGENOM" id="CLU_137946_0_0_6"/>
<dbReference type="OrthoDB" id="9806411at2"/>
<dbReference type="Proteomes" id="UP000002608">
    <property type="component" value="Chromosome"/>
</dbReference>
<dbReference type="GO" id="GO:0022625">
    <property type="term" value="C:cytosolic large ribosomal subunit"/>
    <property type="evidence" value="ECO:0007669"/>
    <property type="project" value="TreeGrafter"/>
</dbReference>
<dbReference type="GO" id="GO:0008097">
    <property type="term" value="F:5S rRNA binding"/>
    <property type="evidence" value="ECO:0007669"/>
    <property type="project" value="InterPro"/>
</dbReference>
<dbReference type="GO" id="GO:0003735">
    <property type="term" value="F:structural constituent of ribosome"/>
    <property type="evidence" value="ECO:0007669"/>
    <property type="project" value="InterPro"/>
</dbReference>
<dbReference type="GO" id="GO:0006412">
    <property type="term" value="P:translation"/>
    <property type="evidence" value="ECO:0007669"/>
    <property type="project" value="UniProtKB-UniRule"/>
</dbReference>
<dbReference type="CDD" id="cd00495">
    <property type="entry name" value="Ribosomal_L25_TL5_CTC"/>
    <property type="match status" value="1"/>
</dbReference>
<dbReference type="FunFam" id="2.40.240.10:FF:000002">
    <property type="entry name" value="50S ribosomal protein L25"/>
    <property type="match status" value="1"/>
</dbReference>
<dbReference type="Gene3D" id="2.40.240.10">
    <property type="entry name" value="Ribosomal Protein L25, Chain P"/>
    <property type="match status" value="1"/>
</dbReference>
<dbReference type="HAMAP" id="MF_01336">
    <property type="entry name" value="Ribosomal_bL25"/>
    <property type="match status" value="1"/>
</dbReference>
<dbReference type="InterPro" id="IPR020056">
    <property type="entry name" value="Rbsml_bL25/Gln-tRNA_synth_N"/>
</dbReference>
<dbReference type="InterPro" id="IPR011035">
    <property type="entry name" value="Ribosomal_bL25/Gln-tRNA_synth"/>
</dbReference>
<dbReference type="InterPro" id="IPR020055">
    <property type="entry name" value="Ribosomal_bL25_short"/>
</dbReference>
<dbReference type="InterPro" id="IPR029751">
    <property type="entry name" value="Ribosomal_L25_dom"/>
</dbReference>
<dbReference type="InterPro" id="IPR020930">
    <property type="entry name" value="Ribosomal_uL5_bac-type"/>
</dbReference>
<dbReference type="NCBIfam" id="NF004612">
    <property type="entry name" value="PRK05943.1"/>
    <property type="match status" value="1"/>
</dbReference>
<dbReference type="PANTHER" id="PTHR33284">
    <property type="entry name" value="RIBOSOMAL PROTEIN L25/GLN-TRNA SYNTHETASE, ANTI-CODON-BINDING DOMAIN-CONTAINING PROTEIN"/>
    <property type="match status" value="1"/>
</dbReference>
<dbReference type="PANTHER" id="PTHR33284:SF1">
    <property type="entry name" value="RIBOSOMAL PROTEIN L25_GLN-TRNA SYNTHETASE, ANTI-CODON-BINDING DOMAIN-CONTAINING PROTEIN"/>
    <property type="match status" value="1"/>
</dbReference>
<dbReference type="Pfam" id="PF01386">
    <property type="entry name" value="Ribosomal_L25p"/>
    <property type="match status" value="1"/>
</dbReference>
<dbReference type="SUPFAM" id="SSF50715">
    <property type="entry name" value="Ribosomal protein L25-like"/>
    <property type="match status" value="1"/>
</dbReference>
<reference key="1">
    <citation type="submission" date="2007-10" db="EMBL/GenBank/DDBJ databases">
        <title>Complete sequence of Shewanella pealeana ATCC 700345.</title>
        <authorList>
            <consortium name="US DOE Joint Genome Institute"/>
            <person name="Copeland A."/>
            <person name="Lucas S."/>
            <person name="Lapidus A."/>
            <person name="Barry K."/>
            <person name="Glavina del Rio T."/>
            <person name="Dalin E."/>
            <person name="Tice H."/>
            <person name="Pitluck S."/>
            <person name="Chertkov O."/>
            <person name="Brettin T."/>
            <person name="Bruce D."/>
            <person name="Detter J.C."/>
            <person name="Han C."/>
            <person name="Schmutz J."/>
            <person name="Larimer F."/>
            <person name="Land M."/>
            <person name="Hauser L."/>
            <person name="Kyrpides N."/>
            <person name="Kim E."/>
            <person name="Zhao J.-S.Z."/>
            <person name="Manno D."/>
            <person name="Hawari J."/>
            <person name="Richardson P."/>
        </authorList>
    </citation>
    <scope>NUCLEOTIDE SEQUENCE [LARGE SCALE GENOMIC DNA]</scope>
    <source>
        <strain>ATCC 700345 / ANG-SQ1</strain>
    </source>
</reference>
<gene>
    <name evidence="1" type="primary">rplY</name>
    <name type="ordered locus">Spea_1959</name>
</gene>
<organism>
    <name type="scientific">Shewanella pealeana (strain ATCC 700345 / ANG-SQ1)</name>
    <dbReference type="NCBI Taxonomy" id="398579"/>
    <lineage>
        <taxon>Bacteria</taxon>
        <taxon>Pseudomonadati</taxon>
        <taxon>Pseudomonadota</taxon>
        <taxon>Gammaproteobacteria</taxon>
        <taxon>Alteromonadales</taxon>
        <taxon>Shewanellaceae</taxon>
        <taxon>Shewanella</taxon>
    </lineage>
</organism>
<evidence type="ECO:0000255" key="1">
    <source>
        <dbReference type="HAMAP-Rule" id="MF_01336"/>
    </source>
</evidence>
<evidence type="ECO:0000305" key="2"/>
<name>RL25_SHEPA</name>
<feature type="chain" id="PRO_1000086645" description="Large ribosomal subunit protein bL25">
    <location>
        <begin position="1"/>
        <end position="95"/>
    </location>
</feature>